<reference key="1">
    <citation type="submission" date="2008-02" db="EMBL/GenBank/DDBJ databases">
        <title>Complete sequence of Pseudomonas putida W619.</title>
        <authorList>
            <person name="Copeland A."/>
            <person name="Lucas S."/>
            <person name="Lapidus A."/>
            <person name="Barry K."/>
            <person name="Detter J.C."/>
            <person name="Glavina del Rio T."/>
            <person name="Dalin E."/>
            <person name="Tice H."/>
            <person name="Pitluck S."/>
            <person name="Chain P."/>
            <person name="Malfatti S."/>
            <person name="Shin M."/>
            <person name="Vergez L."/>
            <person name="Schmutz J."/>
            <person name="Larimer F."/>
            <person name="Land M."/>
            <person name="Hauser L."/>
            <person name="Kyrpides N."/>
            <person name="Kim E."/>
            <person name="Taghavi S."/>
            <person name="Vangronsveld D."/>
            <person name="van der Lelie D."/>
            <person name="Richardson P."/>
        </authorList>
    </citation>
    <scope>NUCLEOTIDE SEQUENCE [LARGE SCALE GENOMIC DNA]</scope>
    <source>
        <strain>W619</strain>
    </source>
</reference>
<gene>
    <name evidence="1" type="primary">atpE</name>
    <name type="ordered locus">PputW619_5205</name>
</gene>
<sequence length="85" mass="8608">METVVGLTAIAVALLIGLGALGTAIGFGLLGGKFLEGAARQPEMVPMLQVKMFIVAGLLDAVTMIGVGIALFFTFANPFVGQIAG</sequence>
<comment type="function">
    <text evidence="1">F(1)F(0) ATP synthase produces ATP from ADP in the presence of a proton or sodium gradient. F-type ATPases consist of two structural domains, F(1) containing the extramembraneous catalytic core and F(0) containing the membrane proton channel, linked together by a central stalk and a peripheral stalk. During catalysis, ATP synthesis in the catalytic domain of F(1) is coupled via a rotary mechanism of the central stalk subunits to proton translocation.</text>
</comment>
<comment type="function">
    <text evidence="1">Key component of the F(0) channel; it plays a direct role in translocation across the membrane. A homomeric c-ring of between 10-14 subunits forms the central stalk rotor element with the F(1) delta and epsilon subunits.</text>
</comment>
<comment type="subunit">
    <text evidence="1">F-type ATPases have 2 components, F(1) - the catalytic core - and F(0) - the membrane proton channel. F(1) has five subunits: alpha(3), beta(3), gamma(1), delta(1), epsilon(1). F(0) has three main subunits: a(1), b(2) and c(10-14). The alpha and beta chains form an alternating ring which encloses part of the gamma chain. F(1) is attached to F(0) by a central stalk formed by the gamma and epsilon chains, while a peripheral stalk is formed by the delta and b chains.</text>
</comment>
<comment type="subcellular location">
    <subcellularLocation>
        <location evidence="1">Cell inner membrane</location>
        <topology evidence="1">Multi-pass membrane protein</topology>
    </subcellularLocation>
</comment>
<comment type="similarity">
    <text evidence="1">Belongs to the ATPase C chain family.</text>
</comment>
<protein>
    <recommendedName>
        <fullName evidence="1">ATP synthase subunit c</fullName>
    </recommendedName>
    <alternativeName>
        <fullName evidence="1">ATP synthase F(0) sector subunit c</fullName>
    </alternativeName>
    <alternativeName>
        <fullName evidence="1">F-type ATPase subunit c</fullName>
        <shortName evidence="1">F-ATPase subunit c</shortName>
    </alternativeName>
    <alternativeName>
        <fullName evidence="1">Lipid-binding protein</fullName>
    </alternativeName>
</protein>
<evidence type="ECO:0000255" key="1">
    <source>
        <dbReference type="HAMAP-Rule" id="MF_01396"/>
    </source>
</evidence>
<proteinExistence type="inferred from homology"/>
<dbReference type="EMBL" id="CP000949">
    <property type="protein sequence ID" value="ACA75680.1"/>
    <property type="molecule type" value="Genomic_DNA"/>
</dbReference>
<dbReference type="SMR" id="B1JFU6"/>
<dbReference type="STRING" id="390235.PputW619_5205"/>
<dbReference type="KEGG" id="ppw:PputW619_5205"/>
<dbReference type="eggNOG" id="ENOG5032S3K">
    <property type="taxonomic scope" value="Bacteria"/>
</dbReference>
<dbReference type="HOGENOM" id="CLU_148047_1_0_6"/>
<dbReference type="OrthoDB" id="9811659at2"/>
<dbReference type="GO" id="GO:0005886">
    <property type="term" value="C:plasma membrane"/>
    <property type="evidence" value="ECO:0007669"/>
    <property type="project" value="UniProtKB-SubCell"/>
</dbReference>
<dbReference type="GO" id="GO:0045259">
    <property type="term" value="C:proton-transporting ATP synthase complex"/>
    <property type="evidence" value="ECO:0007669"/>
    <property type="project" value="UniProtKB-KW"/>
</dbReference>
<dbReference type="GO" id="GO:0033177">
    <property type="term" value="C:proton-transporting two-sector ATPase complex, proton-transporting domain"/>
    <property type="evidence" value="ECO:0007669"/>
    <property type="project" value="InterPro"/>
</dbReference>
<dbReference type="GO" id="GO:0008289">
    <property type="term" value="F:lipid binding"/>
    <property type="evidence" value="ECO:0007669"/>
    <property type="project" value="UniProtKB-KW"/>
</dbReference>
<dbReference type="GO" id="GO:0046933">
    <property type="term" value="F:proton-transporting ATP synthase activity, rotational mechanism"/>
    <property type="evidence" value="ECO:0007669"/>
    <property type="project" value="UniProtKB-UniRule"/>
</dbReference>
<dbReference type="CDD" id="cd18185">
    <property type="entry name" value="ATP-synt_Fo_c_ATPE"/>
    <property type="match status" value="1"/>
</dbReference>
<dbReference type="FunFam" id="1.20.20.10:FF:000002">
    <property type="entry name" value="ATP synthase subunit c"/>
    <property type="match status" value="1"/>
</dbReference>
<dbReference type="Gene3D" id="1.20.20.10">
    <property type="entry name" value="F1F0 ATP synthase subunit C"/>
    <property type="match status" value="1"/>
</dbReference>
<dbReference type="HAMAP" id="MF_01396">
    <property type="entry name" value="ATP_synth_c_bact"/>
    <property type="match status" value="1"/>
</dbReference>
<dbReference type="InterPro" id="IPR005953">
    <property type="entry name" value="ATP_synth_csu_bac/chlpt"/>
</dbReference>
<dbReference type="InterPro" id="IPR000454">
    <property type="entry name" value="ATP_synth_F0_csu"/>
</dbReference>
<dbReference type="InterPro" id="IPR020537">
    <property type="entry name" value="ATP_synth_F0_csu_DDCD_BS"/>
</dbReference>
<dbReference type="InterPro" id="IPR038662">
    <property type="entry name" value="ATP_synth_F0_csu_sf"/>
</dbReference>
<dbReference type="InterPro" id="IPR002379">
    <property type="entry name" value="ATPase_proteolipid_c-like_dom"/>
</dbReference>
<dbReference type="InterPro" id="IPR035921">
    <property type="entry name" value="F/V-ATP_Csub_sf"/>
</dbReference>
<dbReference type="NCBIfam" id="TIGR01260">
    <property type="entry name" value="ATP_synt_c"/>
    <property type="match status" value="1"/>
</dbReference>
<dbReference type="NCBIfam" id="NF005363">
    <property type="entry name" value="PRK06876.1"/>
    <property type="match status" value="1"/>
</dbReference>
<dbReference type="Pfam" id="PF00137">
    <property type="entry name" value="ATP-synt_C"/>
    <property type="match status" value="1"/>
</dbReference>
<dbReference type="PRINTS" id="PR00124">
    <property type="entry name" value="ATPASEC"/>
</dbReference>
<dbReference type="SUPFAM" id="SSF81333">
    <property type="entry name" value="F1F0 ATP synthase subunit C"/>
    <property type="match status" value="1"/>
</dbReference>
<dbReference type="PROSITE" id="PS00605">
    <property type="entry name" value="ATPASE_C"/>
    <property type="match status" value="1"/>
</dbReference>
<organism>
    <name type="scientific">Pseudomonas putida (strain W619)</name>
    <dbReference type="NCBI Taxonomy" id="390235"/>
    <lineage>
        <taxon>Bacteria</taxon>
        <taxon>Pseudomonadati</taxon>
        <taxon>Pseudomonadota</taxon>
        <taxon>Gammaproteobacteria</taxon>
        <taxon>Pseudomonadales</taxon>
        <taxon>Pseudomonadaceae</taxon>
        <taxon>Pseudomonas</taxon>
    </lineage>
</organism>
<feature type="chain" id="PRO_1000184445" description="ATP synthase subunit c">
    <location>
        <begin position="1"/>
        <end position="85"/>
    </location>
</feature>
<feature type="transmembrane region" description="Helical" evidence="1">
    <location>
        <begin position="10"/>
        <end position="30"/>
    </location>
</feature>
<feature type="transmembrane region" description="Helical" evidence="1">
    <location>
        <begin position="53"/>
        <end position="73"/>
    </location>
</feature>
<feature type="site" description="Reversibly protonated during proton transport" evidence="1">
    <location>
        <position position="60"/>
    </location>
</feature>
<accession>B1JFU6</accession>
<name>ATPL_PSEPW</name>
<keyword id="KW-0066">ATP synthesis</keyword>
<keyword id="KW-0997">Cell inner membrane</keyword>
<keyword id="KW-1003">Cell membrane</keyword>
<keyword id="KW-0138">CF(0)</keyword>
<keyword id="KW-0375">Hydrogen ion transport</keyword>
<keyword id="KW-0406">Ion transport</keyword>
<keyword id="KW-0446">Lipid-binding</keyword>
<keyword id="KW-0472">Membrane</keyword>
<keyword id="KW-0812">Transmembrane</keyword>
<keyword id="KW-1133">Transmembrane helix</keyword>
<keyword id="KW-0813">Transport</keyword>